<accession>P55711</accession>
<geneLocation type="plasmid">
    <name>sym pNGR234a</name>
</geneLocation>
<feature type="chain" id="PRO_0000096952" description="Nodulation outer protein X">
    <location>
        <begin position="1"/>
        <end position="596"/>
    </location>
</feature>
<sequence length="596" mass="63923">MSASNLLPMISSNPAQFAQASLAKAFAPRVAQGQQSVLSFEAMLSTNMLDRIGPLASREDLPPPDAESTLEDLQKDPLALLPPHMRAAIESMDQTPQSAVVIDDHYVAPAPIQSSRITWNGGSLTKPELQIVAVLNRHKDLCPLSWESLEAKANDPSTPPDLKAAIEALLQDPELFYAIGSQGDGRCGGKISAKDLSEFSKHHPQVAAFQESQAQSYAQNYIPSDSAENAQPSVMTENDALRELYRYSEYLPKNLSLADFKQIVDGEAKTGKCPPQVIAAAQYFVSHPEEWKQLYGGNIDKVHKEDFLQVASSSMSLTQAELDTLKTINSHQELFFGSGDLTRDKLASMADDKSLDPKVREAASQLLSDPLLFGLLNNAITGYKTHHGFFDFGGGHTVDSGNVSKEDFGRFYTNMTTANRTVQQPKFHVPETEAAQNAVADMKMGLADQPDIKSPKKNGGALMHVVDSVLRVGSKVLDWAATAVGVLSFIPGIGQVADLVSMTLACEAQAANLLRTAITGGNMKQALIEAGIGVAAQAVGLVSGPGVKLAIRNGLARKAIEEAATAGINLPLSMAQHYAEGYLNDLKARLAADHPA</sequence>
<comment type="subcellular location">
    <subcellularLocation>
        <location evidence="1">Secreted</location>
    </subcellularLocation>
    <text>Secreted by the type II secretion system and delivered into the host plant cytoplasm.</text>
</comment>
<proteinExistence type="evidence at protein level"/>
<protein>
    <recommendedName>
        <fullName>Nodulation outer protein X</fullName>
    </recommendedName>
    <alternativeName>
        <fullName>Nodulation protein NolX</fullName>
    </alternativeName>
</protein>
<name>NOPX_SINFN</name>
<keyword id="KW-0903">Direct protein sequencing</keyword>
<keyword id="KW-0536">Nodulation</keyword>
<keyword id="KW-0614">Plasmid</keyword>
<keyword id="KW-1185">Reference proteome</keyword>
<keyword id="KW-0964">Secreted</keyword>
<reference key="1">
    <citation type="journal article" date="1997" name="Nature">
        <title>Molecular basis of symbiosis between Rhizobium and legumes.</title>
        <authorList>
            <person name="Freiberg C.A."/>
            <person name="Fellay R."/>
            <person name="Bairoch A."/>
            <person name="Broughton W.J."/>
            <person name="Rosenthal A."/>
            <person name="Perret X."/>
        </authorList>
    </citation>
    <scope>NUCLEOTIDE SEQUENCE [LARGE SCALE GENOMIC DNA]</scope>
    <source>
        <strain>NBRC 101917 / NGR234</strain>
    </source>
</reference>
<reference key="2">
    <citation type="journal article" date="2009" name="Appl. Environ. Microbiol.">
        <title>Rhizobium sp. strain NGR234 possesses a remarkable number of secretion systems.</title>
        <authorList>
            <person name="Schmeisser C."/>
            <person name="Liesegang H."/>
            <person name="Krysciak D."/>
            <person name="Bakkou N."/>
            <person name="Le Quere A."/>
            <person name="Wollherr A."/>
            <person name="Heinemeyer I."/>
            <person name="Morgenstern B."/>
            <person name="Pommerening-Roeser A."/>
            <person name="Flores M."/>
            <person name="Palacios R."/>
            <person name="Brenner S."/>
            <person name="Gottschalk G."/>
            <person name="Schmitz R.A."/>
            <person name="Broughton W.J."/>
            <person name="Perret X."/>
            <person name="Strittmatter A.W."/>
            <person name="Streit W.R."/>
        </authorList>
    </citation>
    <scope>NUCLEOTIDE SEQUENCE [LARGE SCALE GENOMIC DNA]</scope>
    <source>
        <strain>NBRC 101917 / NGR234</strain>
    </source>
</reference>
<reference key="3">
    <citation type="journal article" date="1998" name="Mol. Microbiol.">
        <title>Symbiotic implications of type III protein secretion machinery in Rhizobium.</title>
        <authorList>
            <person name="Viprey V."/>
            <person name="Del Greco A."/>
            <person name="Golinowski W."/>
            <person name="Broughton W.J."/>
            <person name="Perret X."/>
        </authorList>
    </citation>
    <scope>PROTEIN SEQUENCE OF 1-8</scope>
    <scope>SUBCELLULAR LOCATION</scope>
</reference>
<dbReference type="EMBL" id="U00090">
    <property type="protein sequence ID" value="AAB91942.1"/>
    <property type="molecule type" value="Genomic_DNA"/>
</dbReference>
<dbReference type="RefSeq" id="NP_444155.1">
    <property type="nucleotide sequence ID" value="NC_000914.2"/>
</dbReference>
<dbReference type="RefSeq" id="WP_010875111.1">
    <property type="nucleotide sequence ID" value="NC_000914.2"/>
</dbReference>
<dbReference type="IntAct" id="P55711">
    <property type="interactions" value="2"/>
</dbReference>
<dbReference type="KEGG" id="rhi:NGR_a00700"/>
<dbReference type="PATRIC" id="fig|394.7.peg.62"/>
<dbReference type="eggNOG" id="ENOG502Z91M">
    <property type="taxonomic scope" value="Bacteria"/>
</dbReference>
<dbReference type="HOGENOM" id="CLU_464487_0_0_5"/>
<dbReference type="OrthoDB" id="9801929at2"/>
<dbReference type="Proteomes" id="UP000001054">
    <property type="component" value="Plasmid pNGR234a"/>
</dbReference>
<dbReference type="GO" id="GO:0005576">
    <property type="term" value="C:extracellular region"/>
    <property type="evidence" value="ECO:0007669"/>
    <property type="project" value="UniProtKB-SubCell"/>
</dbReference>
<dbReference type="InterPro" id="IPR008718">
    <property type="entry name" value="NolX"/>
</dbReference>
<dbReference type="Pfam" id="PF05819">
    <property type="entry name" value="NolX"/>
    <property type="match status" value="1"/>
</dbReference>
<gene>
    <name type="primary">nopX</name>
    <name type="synonym">nolX</name>
    <name type="ordered locus">NGR_a00700</name>
    <name type="ORF">y4yC</name>
</gene>
<evidence type="ECO:0000269" key="1">
    <source>
    </source>
</evidence>
<organism>
    <name type="scientific">Sinorhizobium fredii (strain NBRC 101917 / NGR234)</name>
    <dbReference type="NCBI Taxonomy" id="394"/>
    <lineage>
        <taxon>Bacteria</taxon>
        <taxon>Pseudomonadati</taxon>
        <taxon>Pseudomonadota</taxon>
        <taxon>Alphaproteobacteria</taxon>
        <taxon>Hyphomicrobiales</taxon>
        <taxon>Rhizobiaceae</taxon>
        <taxon>Sinorhizobium/Ensifer group</taxon>
        <taxon>Sinorhizobium</taxon>
    </lineage>
</organism>